<organism>
    <name type="scientific">Gallus gallus</name>
    <name type="common">Chicken</name>
    <dbReference type="NCBI Taxonomy" id="9031"/>
    <lineage>
        <taxon>Eukaryota</taxon>
        <taxon>Metazoa</taxon>
        <taxon>Chordata</taxon>
        <taxon>Craniata</taxon>
        <taxon>Vertebrata</taxon>
        <taxon>Euteleostomi</taxon>
        <taxon>Archelosauria</taxon>
        <taxon>Archosauria</taxon>
        <taxon>Dinosauria</taxon>
        <taxon>Saurischia</taxon>
        <taxon>Theropoda</taxon>
        <taxon>Coelurosauria</taxon>
        <taxon>Aves</taxon>
        <taxon>Neognathae</taxon>
        <taxon>Galloanserae</taxon>
        <taxon>Galliformes</taxon>
        <taxon>Phasianidae</taxon>
        <taxon>Phasianinae</taxon>
        <taxon>Gallus</taxon>
    </lineage>
</organism>
<name>SEM3A_CHICK</name>
<gene>
    <name type="primary">SEMA3A</name>
    <name type="synonym">COLL1</name>
</gene>
<sequence length="772" mass="88868">MGWLRGIALLSLGVLLAGRVNCQHVKNNVPRLKLSYKEMLESNNIVNFNGLANSSSYHTFLLDEERSRLYVGAKDHIFSFNLVNIKEYQKIVWPVSHSRRDECKWAGKDILRECANFIKVLKTYNQTHLYACGTGAFHPMCTYIEVGSHPEDNIFRMEDSHFENGRGKSPYDPKLLTASLLVDGELYSGTAADFMGRDFAIFRTLGHHHPIRTEQHDSRWLNDPRFISAHLIPESDNPEDDKIYFFFRENAIDGEHTGKATHARIGQICKNDFGGHRSLVNKWTTFLKARLICSVPGPNGIDTHFDELQDVFLMNSKDPKNPIVYGVFTTSSNIFKGSAVCMYSMTDVRRVFLGPYAHRDGPNYQWVPYQGRVPYPRPGTCPSKTFGGFDSTKDLPDEVITFARSHPAMYNPVFPINSRPIMIKTDVDYQFTQIVVDRVDAEDGQYDVMFIGTDIGTVLKVVSIPKETWHELEEVLLEEMTVFREPTVISAMKISTKQQQLYIGSATGVSQLPLHRCDVYGKACAECCLARDPYCAWDGSSCSRYFPTAKRRTRRQDIRNGDPLTHCSDLQHHDNPSGQTLEEKIIYGVENSSTFLECSPKSQRAIVYWQFQKQNDDHKVEIKVDDRMIRTEQGLLLRSLQRRDSGIYFCHAVEHGFIQTLLKVTLEVIDTDHLEELLHKEEDADASKTKDATNSMTPSQKIWYRDFMQLINHPNLNTMDEFCEQVWKRDRKQRRQRPANAQVNTNKWKHLQENKKGRNRRTHEFERAPRSV</sequence>
<feature type="signal peptide" evidence="2">
    <location>
        <begin position="1"/>
        <end position="22"/>
    </location>
</feature>
<feature type="chain" id="PRO_0000032306" description="Semaphorin-3A">
    <location>
        <begin position="23"/>
        <end position="772"/>
    </location>
</feature>
<feature type="domain" description="Sema" evidence="3">
    <location>
        <begin position="31"/>
        <end position="514"/>
    </location>
</feature>
<feature type="domain" description="Ig-like C2-type">
    <location>
        <begin position="576"/>
        <end position="665"/>
    </location>
</feature>
<feature type="region of interest" description="Disordered" evidence="4">
    <location>
        <begin position="730"/>
        <end position="772"/>
    </location>
</feature>
<feature type="compositionally biased region" description="Basic and acidic residues" evidence="4">
    <location>
        <begin position="750"/>
        <end position="772"/>
    </location>
</feature>
<feature type="glycosylation site" description="N-linked (GlcNAc...) asparagine" evidence="2">
    <location>
        <position position="53"/>
    </location>
</feature>
<feature type="glycosylation site" description="N-linked (GlcNAc...) asparagine" evidence="2">
    <location>
        <position position="125"/>
    </location>
</feature>
<feature type="glycosylation site" description="N-linked (GlcNAc...) asparagine" evidence="2">
    <location>
        <position position="591"/>
    </location>
</feature>
<feature type="disulfide bond" evidence="1">
    <location>
        <begin position="103"/>
        <end position="114"/>
    </location>
</feature>
<feature type="disulfide bond" evidence="1">
    <location>
        <begin position="132"/>
        <end position="141"/>
    </location>
</feature>
<feature type="disulfide bond" evidence="1">
    <location>
        <begin position="269"/>
        <end position="381"/>
    </location>
</feature>
<feature type="disulfide bond" evidence="1">
    <location>
        <begin position="293"/>
        <end position="341"/>
    </location>
</feature>
<feature type="disulfide bond" evidence="1">
    <location>
        <begin position="517"/>
        <end position="535"/>
    </location>
</feature>
<feature type="disulfide bond" evidence="1">
    <location>
        <begin position="650"/>
        <end position="723"/>
    </location>
</feature>
<keyword id="KW-0217">Developmental protein</keyword>
<keyword id="KW-0221">Differentiation</keyword>
<keyword id="KW-0903">Direct protein sequencing</keyword>
<keyword id="KW-1015">Disulfide bond</keyword>
<keyword id="KW-0325">Glycoprotein</keyword>
<keyword id="KW-0393">Immunoglobulin domain</keyword>
<keyword id="KW-0524">Neurogenesis</keyword>
<keyword id="KW-1185">Reference proteome</keyword>
<keyword id="KW-0964">Secreted</keyword>
<keyword id="KW-0732">Signal</keyword>
<reference key="1">
    <citation type="journal article" date="1993" name="Cell">
        <title>Collapsin: a protein in brain that induces the collapse and paralysis of neuronal growth cones.</title>
        <authorList>
            <person name="Luo Y."/>
            <person name="Raible D."/>
            <person name="Raper J.A."/>
        </authorList>
    </citation>
    <scope>NUCLEOTIDE SEQUENCE [MRNA]</scope>
    <scope>PROTEIN SEQUENCE OF 322-329; 362-372; 395-403 AND 666-680</scope>
    <source>
        <tissue>Brain</tissue>
    </source>
</reference>
<evidence type="ECO:0000250" key="1"/>
<evidence type="ECO:0000255" key="2"/>
<evidence type="ECO:0000255" key="3">
    <source>
        <dbReference type="PROSITE-ProRule" id="PRU00352"/>
    </source>
</evidence>
<evidence type="ECO:0000256" key="4">
    <source>
        <dbReference type="SAM" id="MobiDB-lite"/>
    </source>
</evidence>
<evidence type="ECO:0000305" key="5"/>
<comment type="function">
    <text>Induces the collapse and paralysis of neuronal growth cones. Could serve as a ligand that guides specific growth cones by a motility-inhibiting mechanism. Binds to neuropilin.</text>
</comment>
<comment type="subcellular location">
    <subcellularLocation>
        <location evidence="1">Secreted</location>
    </subcellularLocation>
</comment>
<comment type="tissue specificity">
    <text>Expressed at relatively high levels in brain and muscle, moderate levels in lung, bursa, and heart and virtually absent in liver. Collapsin-1, -2, -3, and -5 bind to overlapping but distinct axon tracts.</text>
</comment>
<comment type="domain">
    <text>Strong binding to neuropilin is mediated by the carboxy third of the protein.</text>
</comment>
<comment type="similarity">
    <text evidence="5">Belongs to the semaphorin family.</text>
</comment>
<accession>Q90607</accession>
<proteinExistence type="evidence at protein level"/>
<protein>
    <recommendedName>
        <fullName>Semaphorin-3A</fullName>
    </recommendedName>
    <alternativeName>
        <fullName>Collapsin-1</fullName>
        <shortName>COLL-1</shortName>
    </alternativeName>
</protein>
<dbReference type="EMBL" id="U02528">
    <property type="protein sequence ID" value="AAC59638.1"/>
    <property type="molecule type" value="mRNA"/>
</dbReference>
<dbReference type="PIR" id="A49069">
    <property type="entry name" value="A49069"/>
</dbReference>
<dbReference type="RefSeq" id="NP_990308.2">
    <property type="nucleotide sequence ID" value="NM_204977.1"/>
</dbReference>
<dbReference type="SMR" id="Q90607"/>
<dbReference type="FunCoup" id="Q90607">
    <property type="interactions" value="138"/>
</dbReference>
<dbReference type="STRING" id="9031.ENSGALP00000042260"/>
<dbReference type="GlyCosmos" id="Q90607">
    <property type="glycosylation" value="3 sites, No reported glycans"/>
</dbReference>
<dbReference type="GlyGen" id="Q90607">
    <property type="glycosylation" value="3 sites"/>
</dbReference>
<dbReference type="PaxDb" id="9031-ENSGALP00000042260"/>
<dbReference type="GeneID" id="395825"/>
<dbReference type="KEGG" id="gga:395825"/>
<dbReference type="CTD" id="10371"/>
<dbReference type="VEuPathDB" id="HostDB:geneid_395825"/>
<dbReference type="eggNOG" id="KOG3611">
    <property type="taxonomic scope" value="Eukaryota"/>
</dbReference>
<dbReference type="InParanoid" id="Q90607"/>
<dbReference type="OrthoDB" id="9988752at2759"/>
<dbReference type="PhylomeDB" id="Q90607"/>
<dbReference type="PRO" id="PR:Q90607"/>
<dbReference type="Proteomes" id="UP000000539">
    <property type="component" value="Unassembled WGS sequence"/>
</dbReference>
<dbReference type="GO" id="GO:0030424">
    <property type="term" value="C:axon"/>
    <property type="evidence" value="ECO:0000318"/>
    <property type="project" value="GO_Central"/>
</dbReference>
<dbReference type="GO" id="GO:0044297">
    <property type="term" value="C:cell body"/>
    <property type="evidence" value="ECO:0000314"/>
    <property type="project" value="AgBase"/>
</dbReference>
<dbReference type="GO" id="GO:0005576">
    <property type="term" value="C:extracellular region"/>
    <property type="evidence" value="ECO:0000304"/>
    <property type="project" value="Reactome"/>
</dbReference>
<dbReference type="GO" id="GO:0005615">
    <property type="term" value="C:extracellular space"/>
    <property type="evidence" value="ECO:0000314"/>
    <property type="project" value="AgBase"/>
</dbReference>
<dbReference type="GO" id="GO:0098978">
    <property type="term" value="C:glutamatergic synapse"/>
    <property type="evidence" value="ECO:0000314"/>
    <property type="project" value="SynGO"/>
</dbReference>
<dbReference type="GO" id="GO:0005886">
    <property type="term" value="C:plasma membrane"/>
    <property type="evidence" value="ECO:0000318"/>
    <property type="project" value="GO_Central"/>
</dbReference>
<dbReference type="GO" id="GO:0045499">
    <property type="term" value="F:chemorepellent activity"/>
    <property type="evidence" value="ECO:0000318"/>
    <property type="project" value="GO_Central"/>
</dbReference>
<dbReference type="GO" id="GO:0038191">
    <property type="term" value="F:neuropilin binding"/>
    <property type="evidence" value="ECO:0000353"/>
    <property type="project" value="AgBase"/>
</dbReference>
<dbReference type="GO" id="GO:0030215">
    <property type="term" value="F:semaphorin receptor binding"/>
    <property type="evidence" value="ECO:0000318"/>
    <property type="project" value="GO_Central"/>
</dbReference>
<dbReference type="GO" id="GO:0097156">
    <property type="term" value="P:fasciculation of motor neuron axon"/>
    <property type="evidence" value="ECO:0000315"/>
    <property type="project" value="AgBase"/>
</dbReference>
<dbReference type="GO" id="GO:0008045">
    <property type="term" value="P:motor neuron axon guidance"/>
    <property type="evidence" value="ECO:0000315"/>
    <property type="project" value="AgBase"/>
</dbReference>
<dbReference type="GO" id="GO:0050919">
    <property type="term" value="P:negative chemotaxis"/>
    <property type="evidence" value="ECO:0000318"/>
    <property type="project" value="GO_Central"/>
</dbReference>
<dbReference type="GO" id="GO:2000009">
    <property type="term" value="P:negative regulation of protein localization to cell surface"/>
    <property type="evidence" value="ECO:0000315"/>
    <property type="project" value="AgBase"/>
</dbReference>
<dbReference type="GO" id="GO:0001755">
    <property type="term" value="P:neural crest cell migration"/>
    <property type="evidence" value="ECO:0000318"/>
    <property type="project" value="GO_Central"/>
</dbReference>
<dbReference type="GO" id="GO:1990535">
    <property type="term" value="P:neuron projection maintenance"/>
    <property type="evidence" value="ECO:0000315"/>
    <property type="project" value="AgBase"/>
</dbReference>
<dbReference type="GO" id="GO:0030335">
    <property type="term" value="P:positive regulation of cell migration"/>
    <property type="evidence" value="ECO:0000318"/>
    <property type="project" value="GO_Central"/>
</dbReference>
<dbReference type="GO" id="GO:0050807">
    <property type="term" value="P:regulation of synapse organization"/>
    <property type="evidence" value="ECO:0000314"/>
    <property type="project" value="SynGO"/>
</dbReference>
<dbReference type="GO" id="GO:0071526">
    <property type="term" value="P:semaphorin-plexin signaling pathway"/>
    <property type="evidence" value="ECO:0000318"/>
    <property type="project" value="GO_Central"/>
</dbReference>
<dbReference type="CDD" id="cd05871">
    <property type="entry name" value="Ig_Sema3"/>
    <property type="match status" value="1"/>
</dbReference>
<dbReference type="CDD" id="cd11249">
    <property type="entry name" value="Sema_3A"/>
    <property type="match status" value="1"/>
</dbReference>
<dbReference type="FunFam" id="2.130.10.10:FF:000015">
    <property type="entry name" value="Semaphorin 3B"/>
    <property type="match status" value="1"/>
</dbReference>
<dbReference type="FunFam" id="2.60.40.10:FF:000030">
    <property type="entry name" value="Semaphorin 3F like"/>
    <property type="match status" value="1"/>
</dbReference>
<dbReference type="FunFam" id="3.30.1680.10:FF:000001">
    <property type="entry name" value="Semaphorin 3F like"/>
    <property type="match status" value="1"/>
</dbReference>
<dbReference type="Gene3D" id="2.60.40.10">
    <property type="entry name" value="Immunoglobulins"/>
    <property type="match status" value="1"/>
</dbReference>
<dbReference type="Gene3D" id="3.30.1680.10">
    <property type="entry name" value="ligand-binding face of the semaphorins, domain 2"/>
    <property type="match status" value="1"/>
</dbReference>
<dbReference type="Gene3D" id="2.130.10.10">
    <property type="entry name" value="YVTN repeat-like/Quinoprotein amine dehydrogenase"/>
    <property type="match status" value="1"/>
</dbReference>
<dbReference type="InterPro" id="IPR007110">
    <property type="entry name" value="Ig-like_dom"/>
</dbReference>
<dbReference type="InterPro" id="IPR036179">
    <property type="entry name" value="Ig-like_dom_sf"/>
</dbReference>
<dbReference type="InterPro" id="IPR013783">
    <property type="entry name" value="Ig-like_fold"/>
</dbReference>
<dbReference type="InterPro" id="IPR003599">
    <property type="entry name" value="Ig_sub"/>
</dbReference>
<dbReference type="InterPro" id="IPR013151">
    <property type="entry name" value="Immunoglobulin_dom"/>
</dbReference>
<dbReference type="InterPro" id="IPR016201">
    <property type="entry name" value="PSI"/>
</dbReference>
<dbReference type="InterPro" id="IPR042820">
    <property type="entry name" value="Sema3A_sema"/>
</dbReference>
<dbReference type="InterPro" id="IPR001627">
    <property type="entry name" value="Semap_dom"/>
</dbReference>
<dbReference type="InterPro" id="IPR036352">
    <property type="entry name" value="Semap_dom_sf"/>
</dbReference>
<dbReference type="InterPro" id="IPR027231">
    <property type="entry name" value="Semaphorin"/>
</dbReference>
<dbReference type="InterPro" id="IPR015943">
    <property type="entry name" value="WD40/YVTN_repeat-like_dom_sf"/>
</dbReference>
<dbReference type="PANTHER" id="PTHR11036">
    <property type="entry name" value="SEMAPHORIN"/>
    <property type="match status" value="1"/>
</dbReference>
<dbReference type="PANTHER" id="PTHR11036:SF23">
    <property type="entry name" value="SEMAPHORIN-3A"/>
    <property type="match status" value="1"/>
</dbReference>
<dbReference type="Pfam" id="PF00047">
    <property type="entry name" value="ig"/>
    <property type="match status" value="1"/>
</dbReference>
<dbReference type="Pfam" id="PF01403">
    <property type="entry name" value="Sema"/>
    <property type="match status" value="1"/>
</dbReference>
<dbReference type="SMART" id="SM00409">
    <property type="entry name" value="IG"/>
    <property type="match status" value="1"/>
</dbReference>
<dbReference type="SMART" id="SM00423">
    <property type="entry name" value="PSI"/>
    <property type="match status" value="1"/>
</dbReference>
<dbReference type="SMART" id="SM00630">
    <property type="entry name" value="Sema"/>
    <property type="match status" value="1"/>
</dbReference>
<dbReference type="SUPFAM" id="SSF48726">
    <property type="entry name" value="Immunoglobulin"/>
    <property type="match status" value="1"/>
</dbReference>
<dbReference type="SUPFAM" id="SSF103575">
    <property type="entry name" value="Plexin repeat"/>
    <property type="match status" value="1"/>
</dbReference>
<dbReference type="SUPFAM" id="SSF101912">
    <property type="entry name" value="Sema domain"/>
    <property type="match status" value="1"/>
</dbReference>
<dbReference type="PROSITE" id="PS50835">
    <property type="entry name" value="IG_LIKE"/>
    <property type="match status" value="1"/>
</dbReference>
<dbReference type="PROSITE" id="PS51004">
    <property type="entry name" value="SEMA"/>
    <property type="match status" value="1"/>
</dbReference>